<gene>
    <name evidence="1" type="primary">metE</name>
    <name type="ordered locus">PFL_2404</name>
</gene>
<name>METE_PSEF5</name>
<evidence type="ECO:0000255" key="1">
    <source>
        <dbReference type="HAMAP-Rule" id="MF_00172"/>
    </source>
</evidence>
<organism>
    <name type="scientific">Pseudomonas fluorescens (strain ATCC BAA-477 / NRRL B-23932 / Pf-5)</name>
    <dbReference type="NCBI Taxonomy" id="220664"/>
    <lineage>
        <taxon>Bacteria</taxon>
        <taxon>Pseudomonadati</taxon>
        <taxon>Pseudomonadota</taxon>
        <taxon>Gammaproteobacteria</taxon>
        <taxon>Pseudomonadales</taxon>
        <taxon>Pseudomonadaceae</taxon>
        <taxon>Pseudomonas</taxon>
    </lineage>
</organism>
<reference key="1">
    <citation type="journal article" date="2005" name="Nat. Biotechnol.">
        <title>Complete genome sequence of the plant commensal Pseudomonas fluorescens Pf-5.</title>
        <authorList>
            <person name="Paulsen I.T."/>
            <person name="Press C.M."/>
            <person name="Ravel J."/>
            <person name="Kobayashi D.Y."/>
            <person name="Myers G.S.A."/>
            <person name="Mavrodi D.V."/>
            <person name="DeBoy R.T."/>
            <person name="Seshadri R."/>
            <person name="Ren Q."/>
            <person name="Madupu R."/>
            <person name="Dodson R.J."/>
            <person name="Durkin A.S."/>
            <person name="Brinkac L.M."/>
            <person name="Daugherty S.C."/>
            <person name="Sullivan S.A."/>
            <person name="Rosovitz M.J."/>
            <person name="Gwinn M.L."/>
            <person name="Zhou L."/>
            <person name="Schneider D.J."/>
            <person name="Cartinhour S.W."/>
            <person name="Nelson W.C."/>
            <person name="Weidman J."/>
            <person name="Watkins K."/>
            <person name="Tran K."/>
            <person name="Khouri H."/>
            <person name="Pierson E.A."/>
            <person name="Pierson L.S. III"/>
            <person name="Thomashow L.S."/>
            <person name="Loper J.E."/>
        </authorList>
    </citation>
    <scope>NUCLEOTIDE SEQUENCE [LARGE SCALE GENOMIC DNA]</scope>
    <source>
        <strain>ATCC BAA-477 / NRRL B-23932 / Pf-5</strain>
    </source>
</reference>
<accession>Q4KE22</accession>
<feature type="chain" id="PRO_1000017264" description="5-methyltetrahydropteroyltriglutamate--homocysteine methyltransferase">
    <location>
        <begin position="1"/>
        <end position="762"/>
    </location>
</feature>
<feature type="active site" description="Proton donor" evidence="1">
    <location>
        <position position="701"/>
    </location>
</feature>
<feature type="binding site" evidence="1">
    <location>
        <begin position="16"/>
        <end position="19"/>
    </location>
    <ligand>
        <name>5-methyltetrahydropteroyltri-L-glutamate</name>
        <dbReference type="ChEBI" id="CHEBI:58207"/>
    </ligand>
</feature>
<feature type="binding site" evidence="1">
    <location>
        <position position="117"/>
    </location>
    <ligand>
        <name>5-methyltetrahydropteroyltri-L-glutamate</name>
        <dbReference type="ChEBI" id="CHEBI:58207"/>
    </ligand>
</feature>
<feature type="binding site" evidence="1">
    <location>
        <begin position="438"/>
        <end position="440"/>
    </location>
    <ligand>
        <name>L-homocysteine</name>
        <dbReference type="ChEBI" id="CHEBI:58199"/>
    </ligand>
</feature>
<feature type="binding site" evidence="1">
    <location>
        <begin position="438"/>
        <end position="440"/>
    </location>
    <ligand>
        <name>L-methionine</name>
        <dbReference type="ChEBI" id="CHEBI:57844"/>
    </ligand>
</feature>
<feature type="binding site" evidence="1">
    <location>
        <position position="491"/>
    </location>
    <ligand>
        <name>L-homocysteine</name>
        <dbReference type="ChEBI" id="CHEBI:58199"/>
    </ligand>
</feature>
<feature type="binding site" evidence="1">
    <location>
        <position position="491"/>
    </location>
    <ligand>
        <name>L-methionine</name>
        <dbReference type="ChEBI" id="CHEBI:57844"/>
    </ligand>
</feature>
<feature type="binding site" evidence="1">
    <location>
        <begin position="522"/>
        <end position="523"/>
    </location>
    <ligand>
        <name>5-methyltetrahydropteroyltri-L-glutamate</name>
        <dbReference type="ChEBI" id="CHEBI:58207"/>
    </ligand>
</feature>
<feature type="binding site" evidence="1">
    <location>
        <position position="568"/>
    </location>
    <ligand>
        <name>5-methyltetrahydropteroyltri-L-glutamate</name>
        <dbReference type="ChEBI" id="CHEBI:58207"/>
    </ligand>
</feature>
<feature type="binding site" evidence="1">
    <location>
        <position position="606"/>
    </location>
    <ligand>
        <name>L-homocysteine</name>
        <dbReference type="ChEBI" id="CHEBI:58199"/>
    </ligand>
</feature>
<feature type="binding site" evidence="1">
    <location>
        <position position="606"/>
    </location>
    <ligand>
        <name>L-methionine</name>
        <dbReference type="ChEBI" id="CHEBI:57844"/>
    </ligand>
</feature>
<feature type="binding site" evidence="1">
    <location>
        <position position="612"/>
    </location>
    <ligand>
        <name>5-methyltetrahydropteroyltri-L-glutamate</name>
        <dbReference type="ChEBI" id="CHEBI:58207"/>
    </ligand>
</feature>
<feature type="binding site" evidence="1">
    <location>
        <position position="648"/>
    </location>
    <ligand>
        <name>Zn(2+)</name>
        <dbReference type="ChEBI" id="CHEBI:29105"/>
        <note>catalytic</note>
    </ligand>
</feature>
<feature type="binding site" evidence="1">
    <location>
        <position position="650"/>
    </location>
    <ligand>
        <name>Zn(2+)</name>
        <dbReference type="ChEBI" id="CHEBI:29105"/>
        <note>catalytic</note>
    </ligand>
</feature>
<feature type="binding site" evidence="1">
    <location>
        <position position="672"/>
    </location>
    <ligand>
        <name>Zn(2+)</name>
        <dbReference type="ChEBI" id="CHEBI:29105"/>
        <note>catalytic</note>
    </ligand>
</feature>
<feature type="binding site" evidence="1">
    <location>
        <position position="733"/>
    </location>
    <ligand>
        <name>Zn(2+)</name>
        <dbReference type="ChEBI" id="CHEBI:29105"/>
        <note>catalytic</note>
    </ligand>
</feature>
<keyword id="KW-0028">Amino-acid biosynthesis</keyword>
<keyword id="KW-0479">Metal-binding</keyword>
<keyword id="KW-0486">Methionine biosynthesis</keyword>
<keyword id="KW-0489">Methyltransferase</keyword>
<keyword id="KW-0677">Repeat</keyword>
<keyword id="KW-0808">Transferase</keyword>
<keyword id="KW-0862">Zinc</keyword>
<dbReference type="EC" id="2.1.1.14" evidence="1"/>
<dbReference type="EMBL" id="CP000076">
    <property type="protein sequence ID" value="AAY91677.1"/>
    <property type="molecule type" value="Genomic_DNA"/>
</dbReference>
<dbReference type="RefSeq" id="WP_011060702.1">
    <property type="nucleotide sequence ID" value="NC_004129.6"/>
</dbReference>
<dbReference type="SMR" id="Q4KE22"/>
<dbReference type="STRING" id="220664.PFL_2404"/>
<dbReference type="KEGG" id="pfl:PFL_2404"/>
<dbReference type="PATRIC" id="fig|220664.5.peg.2447"/>
<dbReference type="eggNOG" id="COG0620">
    <property type="taxonomic scope" value="Bacteria"/>
</dbReference>
<dbReference type="HOGENOM" id="CLU_013175_0_0_6"/>
<dbReference type="UniPathway" id="UPA00051">
    <property type="reaction ID" value="UER00082"/>
</dbReference>
<dbReference type="Proteomes" id="UP000008540">
    <property type="component" value="Chromosome"/>
</dbReference>
<dbReference type="GO" id="GO:0003871">
    <property type="term" value="F:5-methyltetrahydropteroyltriglutamate-homocysteine S-methyltransferase activity"/>
    <property type="evidence" value="ECO:0007669"/>
    <property type="project" value="UniProtKB-UniRule"/>
</dbReference>
<dbReference type="GO" id="GO:0008270">
    <property type="term" value="F:zinc ion binding"/>
    <property type="evidence" value="ECO:0007669"/>
    <property type="project" value="InterPro"/>
</dbReference>
<dbReference type="GO" id="GO:0009086">
    <property type="term" value="P:methionine biosynthetic process"/>
    <property type="evidence" value="ECO:0007669"/>
    <property type="project" value="UniProtKB-UniRule"/>
</dbReference>
<dbReference type="GO" id="GO:0032259">
    <property type="term" value="P:methylation"/>
    <property type="evidence" value="ECO:0007669"/>
    <property type="project" value="UniProtKB-KW"/>
</dbReference>
<dbReference type="CDD" id="cd03311">
    <property type="entry name" value="CIMS_C_terminal_like"/>
    <property type="match status" value="1"/>
</dbReference>
<dbReference type="CDD" id="cd03312">
    <property type="entry name" value="CIMS_N_terminal_like"/>
    <property type="match status" value="1"/>
</dbReference>
<dbReference type="FunFam" id="3.20.20.210:FF:000002">
    <property type="entry name" value="5-methyltetrahydropteroyltriglutamate--homocysteine methyltransferase"/>
    <property type="match status" value="1"/>
</dbReference>
<dbReference type="FunFam" id="3.20.20.210:FF:000003">
    <property type="entry name" value="5-methyltetrahydropteroyltriglutamate--homocysteine methyltransferase"/>
    <property type="match status" value="1"/>
</dbReference>
<dbReference type="Gene3D" id="3.20.20.210">
    <property type="match status" value="2"/>
</dbReference>
<dbReference type="HAMAP" id="MF_00172">
    <property type="entry name" value="Meth_synth"/>
    <property type="match status" value="1"/>
</dbReference>
<dbReference type="InterPro" id="IPR013215">
    <property type="entry name" value="Cbl-indep_Met_Synth_N"/>
</dbReference>
<dbReference type="InterPro" id="IPR006276">
    <property type="entry name" value="Cobalamin-indep_Met_synthase"/>
</dbReference>
<dbReference type="InterPro" id="IPR002629">
    <property type="entry name" value="Met_Synth_C/arc"/>
</dbReference>
<dbReference type="InterPro" id="IPR038071">
    <property type="entry name" value="UROD/MetE-like_sf"/>
</dbReference>
<dbReference type="NCBIfam" id="TIGR01371">
    <property type="entry name" value="met_syn_B12ind"/>
    <property type="match status" value="1"/>
</dbReference>
<dbReference type="NCBIfam" id="NF003556">
    <property type="entry name" value="PRK05222.1"/>
    <property type="match status" value="1"/>
</dbReference>
<dbReference type="PANTHER" id="PTHR30519">
    <property type="entry name" value="5-METHYLTETRAHYDROPTEROYLTRIGLUTAMATE--HOMOCYSTEINE METHYLTRANSFERASE"/>
    <property type="match status" value="1"/>
</dbReference>
<dbReference type="Pfam" id="PF08267">
    <property type="entry name" value="Meth_synt_1"/>
    <property type="match status" value="1"/>
</dbReference>
<dbReference type="Pfam" id="PF01717">
    <property type="entry name" value="Meth_synt_2"/>
    <property type="match status" value="1"/>
</dbReference>
<dbReference type="PIRSF" id="PIRSF000382">
    <property type="entry name" value="MeTrfase_B12_ind"/>
    <property type="match status" value="1"/>
</dbReference>
<dbReference type="SUPFAM" id="SSF51726">
    <property type="entry name" value="UROD/MetE-like"/>
    <property type="match status" value="2"/>
</dbReference>
<proteinExistence type="inferred from homology"/>
<sequence>MALAHSLGFPRIGRDRELKKAQEAFWKGELDEAGLRAVGRDLRKTHWELQKNAGIDLLPVGDFAWYDQVLTHSLMFGVIPRRFRPQHGPATLQTLFGMARGVSDGCCGGAHAQEMTKWFDTNYHYLVPEFGADQQFQLGWEQLFEEVEEARALGHAVKPVLIGPLTYLWLGKAKGAEFDKLELLDRLLPLYGQIFQRLAAQGVEWVQIDEPILVLDLPQDWKNAFERAYNQIQREPLKKLLATYFGGLEENLGLAANLPVDGLHIDLVRAPEQYPTILDRLPAYKVLSLGLVNGRNVWRCDLEKALATLQHAHERLGERLWVAPSCSLLHSPVDLDREDQLDAELKSWLAFAVQKCQEVAVLAQAVNQPQARAVLKALEQSRAVQASRAASPRIHKPAVQARVAAITTKDSQRRSAFTQRIAKQRAGLDLPLFPTTTIGSFPQTASIRLARQSFKQGKLSVAEYTEAMHSEIRHAVLVQERLGLDVLVHGEAERNDMVEYFAEQLDGYVFTRFGWVQSYGSRCVKPALIFGDLSRPNAMTVEWIRYAQGLTDKVMKGMLTGPVTMLMWSFPREDVSREVQARQLALAIRDEVLDLEAAGIRIVQIDEAAFREGLPLRRAQWQHYLDWATEVFRLCASGVRDETQIHTHMCYSEFNDVIESIAAMDADVITIETSRSDMELLDAFKAFAYPNEIGPGVYDIHSPRVPDASEMANLLRKAAQRIPAERLWVNPDCGLKTRGWPETEAALVHMVTAARQLRKELA</sequence>
<comment type="function">
    <text evidence="1">Catalyzes the transfer of a methyl group from 5-methyltetrahydrofolate to homocysteine resulting in methionine formation.</text>
</comment>
<comment type="catalytic activity">
    <reaction evidence="1">
        <text>5-methyltetrahydropteroyltri-L-glutamate + L-homocysteine = tetrahydropteroyltri-L-glutamate + L-methionine</text>
        <dbReference type="Rhea" id="RHEA:21196"/>
        <dbReference type="ChEBI" id="CHEBI:57844"/>
        <dbReference type="ChEBI" id="CHEBI:58140"/>
        <dbReference type="ChEBI" id="CHEBI:58199"/>
        <dbReference type="ChEBI" id="CHEBI:58207"/>
        <dbReference type="EC" id="2.1.1.14"/>
    </reaction>
</comment>
<comment type="cofactor">
    <cofactor evidence="1">
        <name>Zn(2+)</name>
        <dbReference type="ChEBI" id="CHEBI:29105"/>
    </cofactor>
    <text evidence="1">Binds 1 zinc ion per subunit.</text>
</comment>
<comment type="pathway">
    <text evidence="1">Amino-acid biosynthesis; L-methionine biosynthesis via de novo pathway; L-methionine from L-homocysteine (MetE route): step 1/1.</text>
</comment>
<comment type="similarity">
    <text evidence="1">Belongs to the vitamin-B12 independent methionine synthase family.</text>
</comment>
<protein>
    <recommendedName>
        <fullName evidence="1">5-methyltetrahydropteroyltriglutamate--homocysteine methyltransferase</fullName>
        <ecNumber evidence="1">2.1.1.14</ecNumber>
    </recommendedName>
    <alternativeName>
        <fullName evidence="1">Cobalamin-independent methionine synthase</fullName>
    </alternativeName>
    <alternativeName>
        <fullName evidence="1">Methionine synthase, vitamin-B12 independent isozyme</fullName>
    </alternativeName>
</protein>